<reference key="1">
    <citation type="journal article" date="1996" name="J. Bacteriol.">
        <title>Malate dehydrogenase from the mesophile Chlorobium vibrioforme and from the mild thermophile Chlorobium tepidum: molecular cloning, construction of a hybrid, and expression in Escherichia coli.</title>
        <authorList>
            <person name="Naterstad K."/>
            <person name="Lauvrak V."/>
            <person name="Sirevag R."/>
        </authorList>
    </citation>
    <scope>NUCLEOTIDE SEQUENCE [GENOMIC DNA]</scope>
</reference>
<protein>
    <recommendedName>
        <fullName evidence="1">Large ribosomal subunit protein bL21</fullName>
    </recommendedName>
    <alternativeName>
        <fullName evidence="2">50S ribosomal protein L21</fullName>
    </alternativeName>
</protein>
<sequence length="95" mass="10902">MQALIEISDKQFLVQEGDKIFVPKQKAVAGDVIEVKSLMKVGQADSALSEGTAKVKVLDHVRDETIIVFRKKRRKRFQRRNGHRQHMTQVEVMSI</sequence>
<comment type="function">
    <text evidence="1">This protein binds to 23S rRNA in the presence of protein L20.</text>
</comment>
<comment type="subunit">
    <text evidence="1">Part of the 50S ribosomal subunit. Contacts protein L20.</text>
</comment>
<comment type="similarity">
    <text evidence="1">Belongs to the bacterial ribosomal protein bL21 family.</text>
</comment>
<accession>P94688</accession>
<evidence type="ECO:0000255" key="1">
    <source>
        <dbReference type="HAMAP-Rule" id="MF_01363"/>
    </source>
</evidence>
<evidence type="ECO:0000305" key="2"/>
<keyword id="KW-0687">Ribonucleoprotein</keyword>
<keyword id="KW-0689">Ribosomal protein</keyword>
<keyword id="KW-0694">RNA-binding</keyword>
<keyword id="KW-0699">rRNA-binding</keyword>
<name>RL21_PROVB</name>
<feature type="chain" id="PRO_0000180998" description="Large ribosomal subunit protein bL21">
    <location>
        <begin position="1"/>
        <end position="95" status="greater than"/>
    </location>
</feature>
<feature type="non-terminal residue">
    <location>
        <position position="95"/>
    </location>
</feature>
<dbReference type="EMBL" id="X79218">
    <property type="protein sequence ID" value="CAA55804.1"/>
    <property type="molecule type" value="Genomic_DNA"/>
</dbReference>
<dbReference type="SMR" id="P94688"/>
<dbReference type="GO" id="GO:0005737">
    <property type="term" value="C:cytoplasm"/>
    <property type="evidence" value="ECO:0007669"/>
    <property type="project" value="UniProtKB-ARBA"/>
</dbReference>
<dbReference type="GO" id="GO:1990904">
    <property type="term" value="C:ribonucleoprotein complex"/>
    <property type="evidence" value="ECO:0007669"/>
    <property type="project" value="UniProtKB-KW"/>
</dbReference>
<dbReference type="GO" id="GO:0005840">
    <property type="term" value="C:ribosome"/>
    <property type="evidence" value="ECO:0007669"/>
    <property type="project" value="UniProtKB-KW"/>
</dbReference>
<dbReference type="GO" id="GO:0019843">
    <property type="term" value="F:rRNA binding"/>
    <property type="evidence" value="ECO:0007669"/>
    <property type="project" value="UniProtKB-KW"/>
</dbReference>
<dbReference type="GO" id="GO:0003735">
    <property type="term" value="F:structural constituent of ribosome"/>
    <property type="evidence" value="ECO:0007669"/>
    <property type="project" value="InterPro"/>
</dbReference>
<dbReference type="GO" id="GO:0006412">
    <property type="term" value="P:translation"/>
    <property type="evidence" value="ECO:0007669"/>
    <property type="project" value="InterPro"/>
</dbReference>
<dbReference type="HAMAP" id="MF_01363">
    <property type="entry name" value="Ribosomal_bL21"/>
    <property type="match status" value="1"/>
</dbReference>
<dbReference type="InterPro" id="IPR028909">
    <property type="entry name" value="bL21-like"/>
</dbReference>
<dbReference type="InterPro" id="IPR036164">
    <property type="entry name" value="bL21-like_sf"/>
</dbReference>
<dbReference type="InterPro" id="IPR001787">
    <property type="entry name" value="Ribosomal_bL21"/>
</dbReference>
<dbReference type="InterPro" id="IPR018258">
    <property type="entry name" value="Ribosomal_bL21_CS"/>
</dbReference>
<dbReference type="NCBIfam" id="TIGR00061">
    <property type="entry name" value="L21"/>
    <property type="match status" value="1"/>
</dbReference>
<dbReference type="PANTHER" id="PTHR21349">
    <property type="entry name" value="50S RIBOSOMAL PROTEIN L21"/>
    <property type="match status" value="1"/>
</dbReference>
<dbReference type="PANTHER" id="PTHR21349:SF0">
    <property type="entry name" value="LARGE RIBOSOMAL SUBUNIT PROTEIN BL21M"/>
    <property type="match status" value="1"/>
</dbReference>
<dbReference type="Pfam" id="PF00829">
    <property type="entry name" value="Ribosomal_L21p"/>
    <property type="match status" value="1"/>
</dbReference>
<dbReference type="SUPFAM" id="SSF141091">
    <property type="entry name" value="L21p-like"/>
    <property type="match status" value="1"/>
</dbReference>
<dbReference type="PROSITE" id="PS01169">
    <property type="entry name" value="RIBOSOMAL_L21"/>
    <property type="match status" value="1"/>
</dbReference>
<proteinExistence type="inferred from homology"/>
<gene>
    <name evidence="1" type="primary">rplU</name>
    <name evidence="1" type="synonym">rpl21</name>
</gene>
<organism>
    <name type="scientific">Prosthecochloris vibrioformis</name>
    <name type="common">Chlorobium vibrioforme</name>
    <dbReference type="NCBI Taxonomy" id="1098"/>
    <lineage>
        <taxon>Bacteria</taxon>
        <taxon>Pseudomonadati</taxon>
        <taxon>Chlorobiota</taxon>
        <taxon>Chlorobiia</taxon>
        <taxon>Chlorobiales</taxon>
        <taxon>Chlorobiaceae</taxon>
        <taxon>Prosthecochloris</taxon>
    </lineage>
</organism>